<gene>
    <name type="primary">merB</name>
</gene>
<evidence type="ECO:0000305" key="1"/>
<keyword id="KW-0456">Lyase</keyword>
<keyword id="KW-0475">Mercuric resistance</keyword>
<keyword id="KW-0476">Mercury</keyword>
<keyword id="KW-0814">Transposable element</keyword>
<dbReference type="EC" id="4.99.1.2"/>
<dbReference type="EMBL" id="AJ318529">
    <property type="protein sequence ID" value="CAC86907.1"/>
    <property type="molecule type" value="Genomic_DNA"/>
</dbReference>
<dbReference type="SMR" id="Q8G9P0"/>
<dbReference type="GO" id="GO:0018836">
    <property type="term" value="F:alkylmercury lyase activity"/>
    <property type="evidence" value="ECO:0007669"/>
    <property type="project" value="UniProtKB-UniRule"/>
</dbReference>
<dbReference type="GO" id="GO:0046689">
    <property type="term" value="P:response to mercury ion"/>
    <property type="evidence" value="ECO:0007669"/>
    <property type="project" value="UniProtKB-UniRule"/>
</dbReference>
<dbReference type="Gene3D" id="3.30.450.410">
    <property type="match status" value="1"/>
</dbReference>
<dbReference type="HAMAP" id="MF_00714">
    <property type="entry name" value="MerB"/>
    <property type="match status" value="1"/>
</dbReference>
<dbReference type="InterPro" id="IPR004927">
    <property type="entry name" value="MerB"/>
</dbReference>
<dbReference type="InterPro" id="IPR024259">
    <property type="entry name" value="MerB_HTH_dom"/>
</dbReference>
<dbReference type="InterPro" id="IPR053717">
    <property type="entry name" value="MerB_lyase_sf"/>
</dbReference>
<dbReference type="InterPro" id="IPR036390">
    <property type="entry name" value="WH_DNA-bd_sf"/>
</dbReference>
<dbReference type="NCBIfam" id="NF033555">
    <property type="entry name" value="lyase_MerB"/>
    <property type="match status" value="1"/>
</dbReference>
<dbReference type="NCBIfam" id="NF009710">
    <property type="entry name" value="PRK13239.1"/>
    <property type="match status" value="1"/>
</dbReference>
<dbReference type="Pfam" id="PF12324">
    <property type="entry name" value="HTH_15"/>
    <property type="match status" value="1"/>
</dbReference>
<dbReference type="Pfam" id="PF03243">
    <property type="entry name" value="MerB"/>
    <property type="match status" value="1"/>
</dbReference>
<dbReference type="PIRSF" id="PIRSF001458">
    <property type="entry name" value="MerB"/>
    <property type="match status" value="1"/>
</dbReference>
<dbReference type="PRINTS" id="PR01699">
    <property type="entry name" value="ORGNOHGLYASE"/>
</dbReference>
<dbReference type="SUPFAM" id="SSF160387">
    <property type="entry name" value="NosL/MerB-like"/>
    <property type="match status" value="1"/>
</dbReference>
<dbReference type="SUPFAM" id="SSF46785">
    <property type="entry name" value="Winged helix' DNA-binding domain"/>
    <property type="match status" value="1"/>
</dbReference>
<feature type="chain" id="PRO_0000220358" description="Alkylmercury lyase">
    <location>
        <begin position="1"/>
        <end position="212"/>
    </location>
</feature>
<sequence>MDKTIYSKKIAESLSSGNHPEEFATLFVTLLRQLVMGRPVSREALGTALGWSGQRVATVLEPAPGTEYDEQGNIIGLGLTLRETPHVFEVDGRRLYTWCALDTLMFPALIGKTARVTSRCVATGRPITLTVAPEAVLQVEPAETMVSLLTPDASPDIRCSFCCHVHFFASPSVANAWASTHPGIELVPVENAFGLGHLIAHKLLEDSERNTA</sequence>
<protein>
    <recommendedName>
        <fullName>Alkylmercury lyase</fullName>
        <ecNumber>4.99.1.2</ecNumber>
    </recommendedName>
    <alternativeName>
        <fullName>Organomercurial lyase</fullName>
    </alternativeName>
</protein>
<reference key="1">
    <citation type="journal article" date="2002" name="Microbiology">
        <title>Tn5041-like transposons: molecular diversity, evolutionary relationships and distribution of distinct variants in environmental bacteria.</title>
        <authorList>
            <person name="Kholodii G."/>
            <person name="Gorlenko Z."/>
            <person name="Mindlin S."/>
            <person name="Hobman J."/>
            <person name="Nikiforov V."/>
        </authorList>
    </citation>
    <scope>NUCLEOTIDE SEQUENCE [GENOMIC DNA]</scope>
    <source>
        <strain>MU10-2</strain>
        <transposon>Tn5041D</transposon>
    </source>
</reference>
<accession>Q8G9P0</accession>
<comment type="function">
    <text>Cleaves the carbon-mercury bond of organomercurials such as phenylmercuric acetate. One product is Hg(2+), which is subsequently detoxified by the mercuric reductase.</text>
</comment>
<comment type="catalytic activity">
    <reaction>
        <text>an alkylmercury + H(+) = an alkane + Hg(2+)</text>
        <dbReference type="Rhea" id="RHEA:18777"/>
        <dbReference type="ChEBI" id="CHEBI:15378"/>
        <dbReference type="ChEBI" id="CHEBI:16793"/>
        <dbReference type="ChEBI" id="CHEBI:18310"/>
        <dbReference type="ChEBI" id="CHEBI:83725"/>
        <dbReference type="EC" id="4.99.1.2"/>
    </reaction>
</comment>
<comment type="similarity">
    <text evidence="1">Belongs to the MerB family.</text>
</comment>
<proteinExistence type="inferred from homology"/>
<organism>
    <name type="scientific">Pseudomonas putida</name>
    <name type="common">Arthrobacter siderocapsulatus</name>
    <dbReference type="NCBI Taxonomy" id="303"/>
    <lineage>
        <taxon>Bacteria</taxon>
        <taxon>Pseudomonadati</taxon>
        <taxon>Pseudomonadota</taxon>
        <taxon>Gammaproteobacteria</taxon>
        <taxon>Pseudomonadales</taxon>
        <taxon>Pseudomonadaceae</taxon>
        <taxon>Pseudomonas</taxon>
    </lineage>
</organism>
<name>MERB_PSEPU</name>